<evidence type="ECO:0000255" key="1">
    <source>
        <dbReference type="HAMAP-Rule" id="MF_00270"/>
    </source>
</evidence>
<evidence type="ECO:0000305" key="2"/>
<protein>
    <recommendedName>
        <fullName evidence="1">Small ribosomal subunit protein bS18</fullName>
    </recommendedName>
    <alternativeName>
        <fullName evidence="2">30S ribosomal protein S18</fullName>
    </alternativeName>
</protein>
<dbReference type="EMBL" id="AP007281">
    <property type="protein sequence ID" value="BAG24525.1"/>
    <property type="molecule type" value="Genomic_DNA"/>
</dbReference>
<dbReference type="RefSeq" id="WP_003665240.1">
    <property type="nucleotide sequence ID" value="NC_010609.1"/>
</dbReference>
<dbReference type="SMR" id="B2G4Z3"/>
<dbReference type="GeneID" id="78174668"/>
<dbReference type="KEGG" id="lrf:LAR_0009"/>
<dbReference type="HOGENOM" id="CLU_148710_2_2_9"/>
<dbReference type="GO" id="GO:0022627">
    <property type="term" value="C:cytosolic small ribosomal subunit"/>
    <property type="evidence" value="ECO:0007669"/>
    <property type="project" value="TreeGrafter"/>
</dbReference>
<dbReference type="GO" id="GO:0070181">
    <property type="term" value="F:small ribosomal subunit rRNA binding"/>
    <property type="evidence" value="ECO:0007669"/>
    <property type="project" value="TreeGrafter"/>
</dbReference>
<dbReference type="GO" id="GO:0003735">
    <property type="term" value="F:structural constituent of ribosome"/>
    <property type="evidence" value="ECO:0007669"/>
    <property type="project" value="InterPro"/>
</dbReference>
<dbReference type="GO" id="GO:0006412">
    <property type="term" value="P:translation"/>
    <property type="evidence" value="ECO:0007669"/>
    <property type="project" value="UniProtKB-UniRule"/>
</dbReference>
<dbReference type="FunFam" id="4.10.640.10:FF:000003">
    <property type="entry name" value="30S ribosomal protein S18"/>
    <property type="match status" value="1"/>
</dbReference>
<dbReference type="Gene3D" id="4.10.640.10">
    <property type="entry name" value="Ribosomal protein S18"/>
    <property type="match status" value="1"/>
</dbReference>
<dbReference type="HAMAP" id="MF_00270">
    <property type="entry name" value="Ribosomal_bS18"/>
    <property type="match status" value="1"/>
</dbReference>
<dbReference type="InterPro" id="IPR001648">
    <property type="entry name" value="Ribosomal_bS18"/>
</dbReference>
<dbReference type="InterPro" id="IPR018275">
    <property type="entry name" value="Ribosomal_bS18_CS"/>
</dbReference>
<dbReference type="InterPro" id="IPR036870">
    <property type="entry name" value="Ribosomal_bS18_sf"/>
</dbReference>
<dbReference type="NCBIfam" id="TIGR00165">
    <property type="entry name" value="S18"/>
    <property type="match status" value="1"/>
</dbReference>
<dbReference type="PANTHER" id="PTHR13479">
    <property type="entry name" value="30S RIBOSOMAL PROTEIN S18"/>
    <property type="match status" value="1"/>
</dbReference>
<dbReference type="PANTHER" id="PTHR13479:SF40">
    <property type="entry name" value="SMALL RIBOSOMAL SUBUNIT PROTEIN BS18M"/>
    <property type="match status" value="1"/>
</dbReference>
<dbReference type="Pfam" id="PF01084">
    <property type="entry name" value="Ribosomal_S18"/>
    <property type="match status" value="1"/>
</dbReference>
<dbReference type="PRINTS" id="PR00974">
    <property type="entry name" value="RIBOSOMALS18"/>
</dbReference>
<dbReference type="SUPFAM" id="SSF46911">
    <property type="entry name" value="Ribosomal protein S18"/>
    <property type="match status" value="1"/>
</dbReference>
<dbReference type="PROSITE" id="PS00057">
    <property type="entry name" value="RIBOSOMAL_S18"/>
    <property type="match status" value="1"/>
</dbReference>
<proteinExistence type="inferred from homology"/>
<comment type="function">
    <text evidence="1">Binds as a heterodimer with protein bS6 to the central domain of the 16S rRNA, where it helps stabilize the platform of the 30S subunit.</text>
</comment>
<comment type="subunit">
    <text evidence="1">Part of the 30S ribosomal subunit. Forms a tight heterodimer with protein bS6.</text>
</comment>
<comment type="similarity">
    <text evidence="1">Belongs to the bacterial ribosomal protein bS18 family.</text>
</comment>
<feature type="chain" id="PRO_1000114429" description="Small ribosomal subunit protein bS18">
    <location>
        <begin position="1"/>
        <end position="78"/>
    </location>
</feature>
<gene>
    <name evidence="1" type="primary">rpsR</name>
    <name type="ordered locus">LAR_0009</name>
</gene>
<keyword id="KW-0687">Ribonucleoprotein</keyword>
<keyword id="KW-0689">Ribosomal protein</keyword>
<keyword id="KW-0694">RNA-binding</keyword>
<keyword id="KW-0699">rRNA-binding</keyword>
<name>RS18_LIMRJ</name>
<organism>
    <name type="scientific">Limosilactobacillus reuteri subsp. reuteri (strain JCM 1112)</name>
    <name type="common">Lactobacillus reuteri</name>
    <dbReference type="NCBI Taxonomy" id="557433"/>
    <lineage>
        <taxon>Bacteria</taxon>
        <taxon>Bacillati</taxon>
        <taxon>Bacillota</taxon>
        <taxon>Bacilli</taxon>
        <taxon>Lactobacillales</taxon>
        <taxon>Lactobacillaceae</taxon>
        <taxon>Limosilactobacillus</taxon>
    </lineage>
</organism>
<accession>B2G4Z3</accession>
<reference key="1">
    <citation type="journal article" date="2008" name="DNA Res.">
        <title>Comparative genome analysis of Lactobacillus reuteri and Lactobacillus fermentum reveal a genomic island for reuterin and cobalamin production.</title>
        <authorList>
            <person name="Morita H."/>
            <person name="Toh H."/>
            <person name="Fukuda S."/>
            <person name="Horikawa H."/>
            <person name="Oshima K."/>
            <person name="Suzuki T."/>
            <person name="Murakami M."/>
            <person name="Hisamatsu S."/>
            <person name="Kato Y."/>
            <person name="Takizawa T."/>
            <person name="Fukuoka H."/>
            <person name="Yoshimura T."/>
            <person name="Itoh K."/>
            <person name="O'Sullivan D.J."/>
            <person name="McKay L.L."/>
            <person name="Ohno H."/>
            <person name="Kikuchi J."/>
            <person name="Masaoka T."/>
            <person name="Hattori M."/>
        </authorList>
    </citation>
    <scope>NUCLEOTIDE SEQUENCE [LARGE SCALE GENOMIC DNA]</scope>
    <source>
        <strain>JCM 1112</strain>
    </source>
</reference>
<sequence length="78" mass="9154">MAQQRRGGRRRRKVDFIAANHIEYIDYKDTDLLRRFISERGKILPRRVTGTSAKNQRKLTIAIKRARIMGLLPFVAED</sequence>